<organism>
    <name type="scientific">Clostridium perfringens (strain SM101 / Type A)</name>
    <dbReference type="NCBI Taxonomy" id="289380"/>
    <lineage>
        <taxon>Bacteria</taxon>
        <taxon>Bacillati</taxon>
        <taxon>Bacillota</taxon>
        <taxon>Clostridia</taxon>
        <taxon>Eubacteriales</taxon>
        <taxon>Clostridiaceae</taxon>
        <taxon>Clostridium</taxon>
    </lineage>
</organism>
<dbReference type="EMBL" id="CP000312">
    <property type="protein sequence ID" value="ABG87035.1"/>
    <property type="molecule type" value="Genomic_DNA"/>
</dbReference>
<dbReference type="RefSeq" id="WP_011592607.1">
    <property type="nucleotide sequence ID" value="NC_008262.1"/>
</dbReference>
<dbReference type="SMR" id="Q0SSB0"/>
<dbReference type="KEGG" id="cpr:CPR_1682"/>
<dbReference type="Proteomes" id="UP000001824">
    <property type="component" value="Chromosome"/>
</dbReference>
<dbReference type="GO" id="GO:0005737">
    <property type="term" value="C:cytoplasm"/>
    <property type="evidence" value="ECO:0007669"/>
    <property type="project" value="UniProtKB-SubCell"/>
</dbReference>
<dbReference type="GO" id="GO:0005840">
    <property type="term" value="C:ribosome"/>
    <property type="evidence" value="ECO:0007669"/>
    <property type="project" value="InterPro"/>
</dbReference>
<dbReference type="GO" id="GO:0043022">
    <property type="term" value="F:ribosome binding"/>
    <property type="evidence" value="ECO:0007669"/>
    <property type="project" value="InterPro"/>
</dbReference>
<dbReference type="GO" id="GO:0042274">
    <property type="term" value="P:ribosomal small subunit biogenesis"/>
    <property type="evidence" value="ECO:0007669"/>
    <property type="project" value="UniProtKB-UniRule"/>
</dbReference>
<dbReference type="GO" id="GO:0006364">
    <property type="term" value="P:rRNA processing"/>
    <property type="evidence" value="ECO:0007669"/>
    <property type="project" value="UniProtKB-UniRule"/>
</dbReference>
<dbReference type="Gene3D" id="2.30.30.240">
    <property type="entry name" value="PRC-barrel domain"/>
    <property type="match status" value="1"/>
</dbReference>
<dbReference type="Gene3D" id="2.40.30.60">
    <property type="entry name" value="RimM"/>
    <property type="match status" value="1"/>
</dbReference>
<dbReference type="HAMAP" id="MF_00014">
    <property type="entry name" value="Ribosome_mat_RimM"/>
    <property type="match status" value="1"/>
</dbReference>
<dbReference type="InterPro" id="IPR027275">
    <property type="entry name" value="PRC-brl_dom"/>
</dbReference>
<dbReference type="InterPro" id="IPR011033">
    <property type="entry name" value="PRC_barrel-like_sf"/>
</dbReference>
<dbReference type="InterPro" id="IPR011961">
    <property type="entry name" value="RimM"/>
</dbReference>
<dbReference type="InterPro" id="IPR002676">
    <property type="entry name" value="RimM_N"/>
</dbReference>
<dbReference type="InterPro" id="IPR036976">
    <property type="entry name" value="RimM_N_sf"/>
</dbReference>
<dbReference type="InterPro" id="IPR009000">
    <property type="entry name" value="Transl_B-barrel_sf"/>
</dbReference>
<dbReference type="NCBIfam" id="TIGR02273">
    <property type="entry name" value="16S_RimM"/>
    <property type="match status" value="1"/>
</dbReference>
<dbReference type="PANTHER" id="PTHR33692">
    <property type="entry name" value="RIBOSOME MATURATION FACTOR RIMM"/>
    <property type="match status" value="1"/>
</dbReference>
<dbReference type="PANTHER" id="PTHR33692:SF1">
    <property type="entry name" value="RIBOSOME MATURATION FACTOR RIMM"/>
    <property type="match status" value="1"/>
</dbReference>
<dbReference type="Pfam" id="PF05239">
    <property type="entry name" value="PRC"/>
    <property type="match status" value="1"/>
</dbReference>
<dbReference type="Pfam" id="PF01782">
    <property type="entry name" value="RimM"/>
    <property type="match status" value="1"/>
</dbReference>
<dbReference type="SUPFAM" id="SSF50346">
    <property type="entry name" value="PRC-barrel domain"/>
    <property type="match status" value="1"/>
</dbReference>
<dbReference type="SUPFAM" id="SSF50447">
    <property type="entry name" value="Translation proteins"/>
    <property type="match status" value="1"/>
</dbReference>
<feature type="chain" id="PRO_1000001165" description="Ribosome maturation factor RimM">
    <location>
        <begin position="1"/>
        <end position="165"/>
    </location>
</feature>
<feature type="domain" description="PRC barrel" evidence="1">
    <location>
        <begin position="90"/>
        <end position="161"/>
    </location>
</feature>
<name>RIMM_CLOPS</name>
<reference key="1">
    <citation type="journal article" date="2006" name="Genome Res.">
        <title>Skewed genomic variability in strains of the toxigenic bacterial pathogen, Clostridium perfringens.</title>
        <authorList>
            <person name="Myers G.S.A."/>
            <person name="Rasko D.A."/>
            <person name="Cheung J.K."/>
            <person name="Ravel J."/>
            <person name="Seshadri R."/>
            <person name="DeBoy R.T."/>
            <person name="Ren Q."/>
            <person name="Varga J."/>
            <person name="Awad M.M."/>
            <person name="Brinkac L.M."/>
            <person name="Daugherty S.C."/>
            <person name="Haft D.H."/>
            <person name="Dodson R.J."/>
            <person name="Madupu R."/>
            <person name="Nelson W.C."/>
            <person name="Rosovitz M.J."/>
            <person name="Sullivan S.A."/>
            <person name="Khouri H."/>
            <person name="Dimitrov G.I."/>
            <person name="Watkins K.L."/>
            <person name="Mulligan S."/>
            <person name="Benton J."/>
            <person name="Radune D."/>
            <person name="Fisher D.J."/>
            <person name="Atkins H.S."/>
            <person name="Hiscox T."/>
            <person name="Jost B.H."/>
            <person name="Billington S.J."/>
            <person name="Songer J.G."/>
            <person name="McClane B.A."/>
            <person name="Titball R.W."/>
            <person name="Rood J.I."/>
            <person name="Melville S.B."/>
            <person name="Paulsen I.T."/>
        </authorList>
    </citation>
    <scope>NUCLEOTIDE SEQUENCE [LARGE SCALE GENOMIC DNA]</scope>
    <source>
        <strain>SM101 / Type A</strain>
    </source>
</reference>
<proteinExistence type="inferred from homology"/>
<gene>
    <name evidence="1" type="primary">rimM</name>
    <name type="ordered locus">CPR_1682</name>
</gene>
<comment type="function">
    <text evidence="1">An accessory protein needed during the final step in the assembly of 30S ribosomal subunit, possibly for assembly of the head region. Essential for efficient processing of 16S rRNA. May be needed both before and after RbfA during the maturation of 16S rRNA. It has affinity for free ribosomal 30S subunits but not for 70S ribosomes.</text>
</comment>
<comment type="subunit">
    <text evidence="1">Binds ribosomal protein uS19.</text>
</comment>
<comment type="subcellular location">
    <subcellularLocation>
        <location evidence="1">Cytoplasm</location>
    </subcellularLocation>
</comment>
<comment type="domain">
    <text evidence="1">The PRC barrel domain binds ribosomal protein uS19.</text>
</comment>
<comment type="similarity">
    <text evidence="1">Belongs to the RimM family.</text>
</comment>
<keyword id="KW-0143">Chaperone</keyword>
<keyword id="KW-0963">Cytoplasm</keyword>
<keyword id="KW-0690">Ribosome biogenesis</keyword>
<keyword id="KW-0698">rRNA processing</keyword>
<sequence length="165" mass="19249">MEDLLVVGQIINTHGLRGEMKVMPLTEDMRRFDYLEYVILKGQKIKVEGVKYFKDKVILKLQGINSIEEAEKLKRTYLEIEREDAIELEEDEYFIVDLVGCTVVDTEGFEYGKIKDVIQTPSNDVYWVQGKKEVLVPVLKDIVLDINMDEKLITIRPSGEWQYED</sequence>
<accession>Q0SSB0</accession>
<evidence type="ECO:0000255" key="1">
    <source>
        <dbReference type="HAMAP-Rule" id="MF_00014"/>
    </source>
</evidence>
<protein>
    <recommendedName>
        <fullName evidence="1">Ribosome maturation factor RimM</fullName>
    </recommendedName>
</protein>